<sequence length="426" mass="46548">MGDNKNNGDSGKLLYCSFCGKSQHEVRKLIAGPSVYVCDECVELCNDIIREEIKEISPKRDNDKLPTPHELRAHLDDYVIGQDRAKKVLSVAVYNHYKRLRNSSPKDGVELGKSNILLIGPTGSGKTLLAETLARSLNVPFTMADATTLTEAGYVGEDVENIIQKLLQKCDYDVEKAQRGIVYIDEIDKISRKSDNPSITRDVSGEGVQQALLKLIEGTVAAVPPQGGRKHPQQEFLQVDTSKILFICGGAFAGLEKVIEQRAHVGSGIGFGAQVKGEKDKATISQTLSQVEPEDLVKYGLIPEFIGRLPVVATLTELDEEALVQILSEPKNALTKQYNALFEMEGVELEFREDALKAIAHKAMSRKTGARGLRSIVEGILLDTMYDIPSIEGVVKAVVDESVVNGESAPILIYERNDAQAASGEQ</sequence>
<comment type="function">
    <text evidence="1">ATP-dependent specificity component of the Clp protease. It directs the protease to specific substrates. Can perform chaperone functions in the absence of ClpP.</text>
</comment>
<comment type="subunit">
    <text evidence="1">Component of the ClpX-ClpP complex. Forms a hexameric ring that, in the presence of ATP, binds to fourteen ClpP subunits assembled into a disk-like structure with a central cavity, resembling the structure of eukaryotic proteasomes.</text>
</comment>
<comment type="similarity">
    <text evidence="1">Belongs to the ClpX chaperone family.</text>
</comment>
<dbReference type="EMBL" id="CP000446">
    <property type="protein sequence ID" value="ABI39565.1"/>
    <property type="molecule type" value="Genomic_DNA"/>
</dbReference>
<dbReference type="RefSeq" id="WP_011623246.1">
    <property type="nucleotide sequence ID" value="NC_008321.1"/>
</dbReference>
<dbReference type="SMR" id="Q0HHA2"/>
<dbReference type="KEGG" id="she:Shewmr4_2494"/>
<dbReference type="HOGENOM" id="CLU_014218_8_2_6"/>
<dbReference type="GO" id="GO:0009376">
    <property type="term" value="C:HslUV protease complex"/>
    <property type="evidence" value="ECO:0007669"/>
    <property type="project" value="TreeGrafter"/>
</dbReference>
<dbReference type="GO" id="GO:0005524">
    <property type="term" value="F:ATP binding"/>
    <property type="evidence" value="ECO:0007669"/>
    <property type="project" value="UniProtKB-UniRule"/>
</dbReference>
<dbReference type="GO" id="GO:0016887">
    <property type="term" value="F:ATP hydrolysis activity"/>
    <property type="evidence" value="ECO:0007669"/>
    <property type="project" value="InterPro"/>
</dbReference>
<dbReference type="GO" id="GO:0140662">
    <property type="term" value="F:ATP-dependent protein folding chaperone"/>
    <property type="evidence" value="ECO:0007669"/>
    <property type="project" value="InterPro"/>
</dbReference>
<dbReference type="GO" id="GO:0046983">
    <property type="term" value="F:protein dimerization activity"/>
    <property type="evidence" value="ECO:0007669"/>
    <property type="project" value="InterPro"/>
</dbReference>
<dbReference type="GO" id="GO:0051082">
    <property type="term" value="F:unfolded protein binding"/>
    <property type="evidence" value="ECO:0007669"/>
    <property type="project" value="UniProtKB-UniRule"/>
</dbReference>
<dbReference type="GO" id="GO:0008270">
    <property type="term" value="F:zinc ion binding"/>
    <property type="evidence" value="ECO:0007669"/>
    <property type="project" value="InterPro"/>
</dbReference>
<dbReference type="GO" id="GO:0051301">
    <property type="term" value="P:cell division"/>
    <property type="evidence" value="ECO:0007669"/>
    <property type="project" value="TreeGrafter"/>
</dbReference>
<dbReference type="GO" id="GO:0051603">
    <property type="term" value="P:proteolysis involved in protein catabolic process"/>
    <property type="evidence" value="ECO:0007669"/>
    <property type="project" value="TreeGrafter"/>
</dbReference>
<dbReference type="CDD" id="cd19497">
    <property type="entry name" value="RecA-like_ClpX"/>
    <property type="match status" value="1"/>
</dbReference>
<dbReference type="FunFam" id="1.10.8.60:FF:000002">
    <property type="entry name" value="ATP-dependent Clp protease ATP-binding subunit ClpX"/>
    <property type="match status" value="1"/>
</dbReference>
<dbReference type="FunFam" id="3.40.50.300:FF:000005">
    <property type="entry name" value="ATP-dependent Clp protease ATP-binding subunit ClpX"/>
    <property type="match status" value="1"/>
</dbReference>
<dbReference type="Gene3D" id="1.10.8.60">
    <property type="match status" value="1"/>
</dbReference>
<dbReference type="Gene3D" id="6.20.220.10">
    <property type="entry name" value="ClpX chaperone, C4-type zinc finger domain"/>
    <property type="match status" value="1"/>
</dbReference>
<dbReference type="Gene3D" id="3.40.50.300">
    <property type="entry name" value="P-loop containing nucleotide triphosphate hydrolases"/>
    <property type="match status" value="1"/>
</dbReference>
<dbReference type="HAMAP" id="MF_00175">
    <property type="entry name" value="ClpX"/>
    <property type="match status" value="1"/>
</dbReference>
<dbReference type="InterPro" id="IPR003593">
    <property type="entry name" value="AAA+_ATPase"/>
</dbReference>
<dbReference type="InterPro" id="IPR050052">
    <property type="entry name" value="ATP-dep_Clp_protease_ClpX"/>
</dbReference>
<dbReference type="InterPro" id="IPR003959">
    <property type="entry name" value="ATPase_AAA_core"/>
</dbReference>
<dbReference type="InterPro" id="IPR019489">
    <property type="entry name" value="Clp_ATPase_C"/>
</dbReference>
<dbReference type="InterPro" id="IPR004487">
    <property type="entry name" value="Clp_protease_ATP-bd_su_ClpX"/>
</dbReference>
<dbReference type="InterPro" id="IPR046425">
    <property type="entry name" value="ClpX_bact"/>
</dbReference>
<dbReference type="InterPro" id="IPR027417">
    <property type="entry name" value="P-loop_NTPase"/>
</dbReference>
<dbReference type="InterPro" id="IPR010603">
    <property type="entry name" value="Znf_CppX_C4"/>
</dbReference>
<dbReference type="InterPro" id="IPR038366">
    <property type="entry name" value="Znf_CppX_C4_sf"/>
</dbReference>
<dbReference type="NCBIfam" id="TIGR00382">
    <property type="entry name" value="clpX"/>
    <property type="match status" value="1"/>
</dbReference>
<dbReference type="NCBIfam" id="NF003745">
    <property type="entry name" value="PRK05342.1"/>
    <property type="match status" value="1"/>
</dbReference>
<dbReference type="PANTHER" id="PTHR48102:SF7">
    <property type="entry name" value="ATP-DEPENDENT CLP PROTEASE ATP-BINDING SUBUNIT CLPX-LIKE, MITOCHONDRIAL"/>
    <property type="match status" value="1"/>
</dbReference>
<dbReference type="PANTHER" id="PTHR48102">
    <property type="entry name" value="ATP-DEPENDENT CLP PROTEASE ATP-BINDING SUBUNIT CLPX-LIKE, MITOCHONDRIAL-RELATED"/>
    <property type="match status" value="1"/>
</dbReference>
<dbReference type="Pfam" id="PF07724">
    <property type="entry name" value="AAA_2"/>
    <property type="match status" value="1"/>
</dbReference>
<dbReference type="Pfam" id="PF10431">
    <property type="entry name" value="ClpB_D2-small"/>
    <property type="match status" value="1"/>
</dbReference>
<dbReference type="Pfam" id="PF06689">
    <property type="entry name" value="zf-C4_ClpX"/>
    <property type="match status" value="1"/>
</dbReference>
<dbReference type="SMART" id="SM00382">
    <property type="entry name" value="AAA"/>
    <property type="match status" value="1"/>
</dbReference>
<dbReference type="SMART" id="SM01086">
    <property type="entry name" value="ClpB_D2-small"/>
    <property type="match status" value="1"/>
</dbReference>
<dbReference type="SMART" id="SM00994">
    <property type="entry name" value="zf-C4_ClpX"/>
    <property type="match status" value="1"/>
</dbReference>
<dbReference type="SUPFAM" id="SSF57716">
    <property type="entry name" value="Glucocorticoid receptor-like (DNA-binding domain)"/>
    <property type="match status" value="1"/>
</dbReference>
<dbReference type="SUPFAM" id="SSF52540">
    <property type="entry name" value="P-loop containing nucleoside triphosphate hydrolases"/>
    <property type="match status" value="1"/>
</dbReference>
<dbReference type="PROSITE" id="PS51902">
    <property type="entry name" value="CLPX_ZB"/>
    <property type="match status" value="1"/>
</dbReference>
<accession>Q0HHA2</accession>
<evidence type="ECO:0000255" key="1">
    <source>
        <dbReference type="HAMAP-Rule" id="MF_00175"/>
    </source>
</evidence>
<evidence type="ECO:0000255" key="2">
    <source>
        <dbReference type="PROSITE-ProRule" id="PRU01250"/>
    </source>
</evidence>
<feature type="chain" id="PRO_1000024657" description="ATP-dependent Clp protease ATP-binding subunit ClpX">
    <location>
        <begin position="1"/>
        <end position="426"/>
    </location>
</feature>
<feature type="domain" description="ClpX-type ZB" evidence="2">
    <location>
        <begin position="4"/>
        <end position="57"/>
    </location>
</feature>
<feature type="binding site" evidence="2">
    <location>
        <position position="16"/>
    </location>
    <ligand>
        <name>Zn(2+)</name>
        <dbReference type="ChEBI" id="CHEBI:29105"/>
    </ligand>
</feature>
<feature type="binding site" evidence="2">
    <location>
        <position position="19"/>
    </location>
    <ligand>
        <name>Zn(2+)</name>
        <dbReference type="ChEBI" id="CHEBI:29105"/>
    </ligand>
</feature>
<feature type="binding site" evidence="2">
    <location>
        <position position="38"/>
    </location>
    <ligand>
        <name>Zn(2+)</name>
        <dbReference type="ChEBI" id="CHEBI:29105"/>
    </ligand>
</feature>
<feature type="binding site" evidence="2">
    <location>
        <position position="41"/>
    </location>
    <ligand>
        <name>Zn(2+)</name>
        <dbReference type="ChEBI" id="CHEBI:29105"/>
    </ligand>
</feature>
<feature type="binding site" evidence="1">
    <location>
        <begin position="121"/>
        <end position="128"/>
    </location>
    <ligand>
        <name>ATP</name>
        <dbReference type="ChEBI" id="CHEBI:30616"/>
    </ligand>
</feature>
<organism>
    <name type="scientific">Shewanella sp. (strain MR-4)</name>
    <dbReference type="NCBI Taxonomy" id="60480"/>
    <lineage>
        <taxon>Bacteria</taxon>
        <taxon>Pseudomonadati</taxon>
        <taxon>Pseudomonadota</taxon>
        <taxon>Gammaproteobacteria</taxon>
        <taxon>Alteromonadales</taxon>
        <taxon>Shewanellaceae</taxon>
        <taxon>Shewanella</taxon>
    </lineage>
</organism>
<proteinExistence type="inferred from homology"/>
<protein>
    <recommendedName>
        <fullName evidence="1">ATP-dependent Clp protease ATP-binding subunit ClpX</fullName>
    </recommendedName>
</protein>
<gene>
    <name evidence="1" type="primary">clpX</name>
    <name type="ordered locus">Shewmr4_2494</name>
</gene>
<keyword id="KW-0067">ATP-binding</keyword>
<keyword id="KW-0143">Chaperone</keyword>
<keyword id="KW-0479">Metal-binding</keyword>
<keyword id="KW-0547">Nucleotide-binding</keyword>
<keyword id="KW-0862">Zinc</keyword>
<reference key="1">
    <citation type="submission" date="2006-08" db="EMBL/GenBank/DDBJ databases">
        <title>Complete sequence of Shewanella sp. MR-4.</title>
        <authorList>
            <consortium name="US DOE Joint Genome Institute"/>
            <person name="Copeland A."/>
            <person name="Lucas S."/>
            <person name="Lapidus A."/>
            <person name="Barry K."/>
            <person name="Detter J.C."/>
            <person name="Glavina del Rio T."/>
            <person name="Hammon N."/>
            <person name="Israni S."/>
            <person name="Dalin E."/>
            <person name="Tice H."/>
            <person name="Pitluck S."/>
            <person name="Kiss H."/>
            <person name="Brettin T."/>
            <person name="Bruce D."/>
            <person name="Han C."/>
            <person name="Tapia R."/>
            <person name="Gilna P."/>
            <person name="Schmutz J."/>
            <person name="Larimer F."/>
            <person name="Land M."/>
            <person name="Hauser L."/>
            <person name="Kyrpides N."/>
            <person name="Mikhailova N."/>
            <person name="Nealson K."/>
            <person name="Konstantinidis K."/>
            <person name="Klappenbach J."/>
            <person name="Tiedje J."/>
            <person name="Richardson P."/>
        </authorList>
    </citation>
    <scope>NUCLEOTIDE SEQUENCE [LARGE SCALE GENOMIC DNA]</scope>
    <source>
        <strain>MR-4</strain>
    </source>
</reference>
<name>CLPX_SHESM</name>